<name>GNRHR_MOUSE</name>
<keyword id="KW-1003">Cell membrane</keyword>
<keyword id="KW-1015">Disulfide bond</keyword>
<keyword id="KW-0297">G-protein coupled receptor</keyword>
<keyword id="KW-0325">Glycoprotein</keyword>
<keyword id="KW-0472">Membrane</keyword>
<keyword id="KW-0675">Receptor</keyword>
<keyword id="KW-1185">Reference proteome</keyword>
<keyword id="KW-0807">Transducer</keyword>
<keyword id="KW-0812">Transmembrane</keyword>
<keyword id="KW-1133">Transmembrane helix</keyword>
<accession>Q01776</accession>
<accession>Q61611</accession>
<feature type="chain" id="PRO_0000069489" description="Gonadotropin-releasing hormone receptor">
    <location>
        <begin position="1"/>
        <end position="327"/>
    </location>
</feature>
<feature type="topological domain" description="Extracellular" evidence="1">
    <location>
        <begin position="1"/>
        <end position="38"/>
    </location>
</feature>
<feature type="transmembrane region" description="Helical; Name=1" evidence="1">
    <location>
        <begin position="39"/>
        <end position="58"/>
    </location>
</feature>
<feature type="topological domain" description="Cytoplasmic" evidence="1">
    <location>
        <begin position="59"/>
        <end position="77"/>
    </location>
</feature>
<feature type="transmembrane region" description="Helical; Name=2" evidence="1">
    <location>
        <begin position="78"/>
        <end position="97"/>
    </location>
</feature>
<feature type="topological domain" description="Extracellular" evidence="1">
    <location>
        <begin position="98"/>
        <end position="115"/>
    </location>
</feature>
<feature type="transmembrane region" description="Helical; Name=3" evidence="1">
    <location>
        <begin position="116"/>
        <end position="137"/>
    </location>
</feature>
<feature type="topological domain" description="Cytoplasmic" evidence="1">
    <location>
        <begin position="138"/>
        <end position="164"/>
    </location>
</feature>
<feature type="transmembrane region" description="Helical; Name=4" evidence="1">
    <location>
        <begin position="165"/>
        <end position="184"/>
    </location>
</feature>
<feature type="topological domain" description="Extracellular" evidence="1">
    <location>
        <begin position="185"/>
        <end position="211"/>
    </location>
</feature>
<feature type="transmembrane region" description="Helical; Name=5" evidence="1">
    <location>
        <begin position="212"/>
        <end position="231"/>
    </location>
</feature>
<feature type="topological domain" description="Cytoplasmic" evidence="1">
    <location>
        <begin position="232"/>
        <end position="280"/>
    </location>
</feature>
<feature type="transmembrane region" description="Helical; Name=6" evidence="1">
    <location>
        <begin position="281"/>
        <end position="299"/>
    </location>
</feature>
<feature type="topological domain" description="Extracellular" evidence="1">
    <location>
        <begin position="300"/>
        <end position="305"/>
    </location>
</feature>
<feature type="transmembrane region" description="Helical; Name=7" evidence="1">
    <location>
        <begin position="306"/>
        <end position="325"/>
    </location>
</feature>
<feature type="topological domain" description="Cytoplasmic" evidence="1">
    <location>
        <begin position="326"/>
        <end position="327"/>
    </location>
</feature>
<feature type="glycosylation site" description="N-linked (GlcNAc...) asparagine" evidence="1">
    <location>
        <position position="4"/>
    </location>
</feature>
<feature type="glycosylation site" description="N-linked (GlcNAc...) asparagine" evidence="1">
    <location>
        <position position="18"/>
    </location>
</feature>
<feature type="glycosylation site" description="N-linked (GlcNAc...) asparagine" evidence="1">
    <location>
        <position position="102"/>
    </location>
</feature>
<feature type="disulfide bond" evidence="2">
    <location>
        <begin position="114"/>
        <end position="195"/>
    </location>
</feature>
<feature type="sequence conflict" description="In Ref. 3; AAA37716." evidence="4" ref="3">
    <original>M</original>
    <variation>I</variation>
    <location>
        <position position="76"/>
    </location>
</feature>
<proteinExistence type="evidence at transcript level"/>
<reference key="1">
    <citation type="journal article" date="1992" name="Mol. Endocrinol.">
        <title>Cloning and functional expression of a mouse gonadotropin-releasing hormone receptor.</title>
        <authorList>
            <person name="Tsutsumi M."/>
            <person name="Zhou W."/>
            <person name="Millar R.P."/>
            <person name="Mellon P.L."/>
            <person name="Roberts J.L."/>
            <person name="Flanagan C.A."/>
            <person name="Dong K."/>
            <person name="Gillo B."/>
            <person name="Sealfon S.C."/>
        </authorList>
    </citation>
    <scope>NUCLEOTIDE SEQUENCE [MRNA]</scope>
</reference>
<reference key="2">
    <citation type="journal article" date="1992" name="J. Biol. Chem.">
        <title>Molecular cloning and expression of cDNA encoding the murine gonadotropin-releasing hormone receptor.</title>
        <authorList>
            <person name="Reinhart J."/>
            <person name="Mertz L.M."/>
            <person name="Catt K.J."/>
        </authorList>
    </citation>
    <scope>NUCLEOTIDE SEQUENCE [MRNA]</scope>
</reference>
<reference key="3">
    <citation type="submission" date="1994-06" db="EMBL/GenBank/DDBJ databases">
        <authorList>
            <person name="Clay C.M."/>
            <person name="Nelson S.E."/>
            <person name="Campion C.E."/>
            <person name="Digregorio G.B."/>
        </authorList>
    </citation>
    <scope>NUCLEOTIDE SEQUENCE [GENOMIC DNA]</scope>
    <source>
        <strain>BALB/cJ</strain>
        <tissue>Liver</tissue>
    </source>
</reference>
<reference key="4">
    <citation type="journal article" date="2013" name="Mol. Endocrinol.">
        <title>Msx1 homeodomain protein represses the alphaGSU and GnRH receptor genes during gonadotrope development.</title>
        <authorList>
            <person name="Xie H."/>
            <person name="Cherrington B.D."/>
            <person name="Meadows J.D."/>
            <person name="Witham E.A."/>
            <person name="Mellon P.L."/>
        </authorList>
    </citation>
    <scope>DEVELOPMENTAL STAGE</scope>
</reference>
<protein>
    <recommendedName>
        <fullName>Gonadotropin-releasing hormone receptor</fullName>
        <shortName>GnRH receptor</shortName>
        <shortName>GnRH-R</shortName>
    </recommendedName>
</protein>
<comment type="function">
    <text>Receptor for gonadotropin releasing hormone (GnRH) that mediates the action of GnRH to stimulate the secretion of the gonadotropic hormones luteinizing hormone (LH) and follicle-stimulating hormone (FSH). This receptor mediates its action by association with G-proteins that activate a phosphatidylinositol-calcium second messenger system.</text>
</comment>
<comment type="subcellular location">
    <subcellularLocation>
        <location>Cell membrane</location>
        <topology>Multi-pass membrane protein</topology>
    </subcellularLocation>
</comment>
<comment type="tissue specificity">
    <text>Pituitary gland.</text>
</comment>
<comment type="developmental stage">
    <text evidence="3">Expressed in the developing pituitary gland at 18.5 dpc.</text>
</comment>
<comment type="similarity">
    <text evidence="2">Belongs to the G-protein coupled receptor 1 family.</text>
</comment>
<sequence length="327" mass="37684">MANNASLEQDPNHCSAINNSIPLIQGKLPTLTVSGKIRVTVTFFLFLLSTAFNASFLLKLQKWTQKRKKGKKLSRMKVLLKHLTLANLLETLIVMPLDGMWNITVQWYAGEFLCKVLSYLKLFSMYAPAFMMVVISLDRSLAITQPLAVQSNSKLEQSMISLAWILSIVFAGPQLYIFRMIYLADGSGPTVFSQCVTHCSFPQWWHQAFYNFFTFGCLFIIPLLIMLICNAKIIFALTRVLHQDPRKLQLNQSKNNIPRARLRTLKMTVAFATSFVVCWTPYYVLGIWYWFDPEMLNRVSEPVNHFFFLFAFLNPCFDPLIYGYFSL</sequence>
<organism>
    <name type="scientific">Mus musculus</name>
    <name type="common">Mouse</name>
    <dbReference type="NCBI Taxonomy" id="10090"/>
    <lineage>
        <taxon>Eukaryota</taxon>
        <taxon>Metazoa</taxon>
        <taxon>Chordata</taxon>
        <taxon>Craniata</taxon>
        <taxon>Vertebrata</taxon>
        <taxon>Euteleostomi</taxon>
        <taxon>Mammalia</taxon>
        <taxon>Eutheria</taxon>
        <taxon>Euarchontoglires</taxon>
        <taxon>Glires</taxon>
        <taxon>Rodentia</taxon>
        <taxon>Myomorpha</taxon>
        <taxon>Muroidea</taxon>
        <taxon>Muridae</taxon>
        <taxon>Murinae</taxon>
        <taxon>Mus</taxon>
        <taxon>Mus</taxon>
    </lineage>
</organism>
<dbReference type="EMBL" id="L01119">
    <property type="protein sequence ID" value="AAB59636.1"/>
    <property type="molecule type" value="mRNA"/>
</dbReference>
<dbReference type="EMBL" id="M93108">
    <property type="status" value="NOT_ANNOTATED_CDS"/>
    <property type="molecule type" value="mRNA"/>
</dbReference>
<dbReference type="EMBL" id="L33789">
    <property type="protein sequence ID" value="AAA37716.1"/>
    <property type="molecule type" value="Genomic_DNA"/>
</dbReference>
<dbReference type="EMBL" id="L33778">
    <property type="protein sequence ID" value="AAA37716.1"/>
    <property type="status" value="JOINED"/>
    <property type="molecule type" value="Genomic_DNA"/>
</dbReference>
<dbReference type="EMBL" id="L33788">
    <property type="protein sequence ID" value="AAA37716.1"/>
    <property type="status" value="JOINED"/>
    <property type="molecule type" value="Genomic_DNA"/>
</dbReference>
<dbReference type="CCDS" id="CCDS19379.1"/>
<dbReference type="PIR" id="A44013">
    <property type="entry name" value="A44013"/>
</dbReference>
<dbReference type="RefSeq" id="NP_034453.1">
    <property type="nucleotide sequence ID" value="NM_010323.2"/>
</dbReference>
<dbReference type="SMR" id="Q01776"/>
<dbReference type="CORUM" id="Q01776"/>
<dbReference type="FunCoup" id="Q01776">
    <property type="interactions" value="1151"/>
</dbReference>
<dbReference type="STRING" id="10090.ENSMUSP00000031172"/>
<dbReference type="BindingDB" id="Q01776"/>
<dbReference type="ChEMBL" id="CHEMBL3232679"/>
<dbReference type="DrugCentral" id="Q01776"/>
<dbReference type="GuidetoPHARMACOLOGY" id="256"/>
<dbReference type="GlyCosmos" id="Q01776">
    <property type="glycosylation" value="3 sites, No reported glycans"/>
</dbReference>
<dbReference type="GlyGen" id="Q01776">
    <property type="glycosylation" value="3 sites"/>
</dbReference>
<dbReference type="iPTMnet" id="Q01776"/>
<dbReference type="PhosphoSitePlus" id="Q01776"/>
<dbReference type="PaxDb" id="10090-ENSMUSP00000031172"/>
<dbReference type="Antibodypedia" id="12675">
    <property type="antibodies" value="439 antibodies from 35 providers"/>
</dbReference>
<dbReference type="DNASU" id="14715"/>
<dbReference type="Ensembl" id="ENSMUST00000031172.9">
    <property type="protein sequence ID" value="ENSMUSP00000031172.9"/>
    <property type="gene ID" value="ENSMUSG00000029255.9"/>
</dbReference>
<dbReference type="GeneID" id="14715"/>
<dbReference type="KEGG" id="mmu:14715"/>
<dbReference type="UCSC" id="uc008xxl.1">
    <property type="organism name" value="mouse"/>
</dbReference>
<dbReference type="AGR" id="MGI:95790"/>
<dbReference type="CTD" id="2798"/>
<dbReference type="MGI" id="MGI:95790">
    <property type="gene designation" value="Gnrhr"/>
</dbReference>
<dbReference type="VEuPathDB" id="HostDB:ENSMUSG00000029255"/>
<dbReference type="eggNOG" id="KOG3656">
    <property type="taxonomic scope" value="Eukaryota"/>
</dbReference>
<dbReference type="GeneTree" id="ENSGT01130000278263"/>
<dbReference type="HOGENOM" id="CLU_009579_15_2_1"/>
<dbReference type="InParanoid" id="Q01776"/>
<dbReference type="OMA" id="LHQDPHE"/>
<dbReference type="OrthoDB" id="6022667at2759"/>
<dbReference type="PhylomeDB" id="Q01776"/>
<dbReference type="TreeFam" id="TF106499"/>
<dbReference type="Reactome" id="R-MMU-375281">
    <property type="pathway name" value="Hormone ligand-binding receptors"/>
</dbReference>
<dbReference type="Reactome" id="R-MMU-416476">
    <property type="pathway name" value="G alpha (q) signalling events"/>
</dbReference>
<dbReference type="BioGRID-ORCS" id="14715">
    <property type="hits" value="5 hits in 77 CRISPR screens"/>
</dbReference>
<dbReference type="ChiTaRS" id="Gnrhr">
    <property type="organism name" value="mouse"/>
</dbReference>
<dbReference type="PRO" id="PR:Q01776"/>
<dbReference type="Proteomes" id="UP000000589">
    <property type="component" value="Chromosome 5"/>
</dbReference>
<dbReference type="RNAct" id="Q01776">
    <property type="molecule type" value="protein"/>
</dbReference>
<dbReference type="Bgee" id="ENSMUSG00000029255">
    <property type="expression patterns" value="Expressed in lumbar subsegment of spinal cord and 34 other cell types or tissues"/>
</dbReference>
<dbReference type="ExpressionAtlas" id="Q01776">
    <property type="expression patterns" value="baseline and differential"/>
</dbReference>
<dbReference type="GO" id="GO:0005886">
    <property type="term" value="C:plasma membrane"/>
    <property type="evidence" value="ECO:0007669"/>
    <property type="project" value="UniProtKB-SubCell"/>
</dbReference>
<dbReference type="GO" id="GO:0004968">
    <property type="term" value="F:gonadotropin-releasing hormone receptor activity"/>
    <property type="evidence" value="ECO:0007669"/>
    <property type="project" value="Ensembl"/>
</dbReference>
<dbReference type="FunFam" id="1.20.1070.10:FF:000203">
    <property type="entry name" value="gonadotropin-releasing hormone receptor"/>
    <property type="match status" value="1"/>
</dbReference>
<dbReference type="Gene3D" id="1.20.1070.10">
    <property type="entry name" value="Rhodopsin 7-helix transmembrane proteins"/>
    <property type="match status" value="1"/>
</dbReference>
<dbReference type="InterPro" id="IPR000276">
    <property type="entry name" value="GPCR_Rhodpsn"/>
</dbReference>
<dbReference type="InterPro" id="IPR017452">
    <property type="entry name" value="GPCR_Rhodpsn_7TM"/>
</dbReference>
<dbReference type="InterPro" id="IPR001658">
    <property type="entry name" value="GphnRH_fam_rcpt"/>
</dbReference>
<dbReference type="PANTHER" id="PTHR24241:SF22">
    <property type="entry name" value="GONADOTROPIN-RELEASING HORMONE RECEPTOR"/>
    <property type="match status" value="1"/>
</dbReference>
<dbReference type="PANTHER" id="PTHR24241">
    <property type="entry name" value="NEUROPEPTIDE RECEPTOR-RELATED G-PROTEIN COUPLED RECEPTOR"/>
    <property type="match status" value="1"/>
</dbReference>
<dbReference type="Pfam" id="PF00001">
    <property type="entry name" value="7tm_1"/>
    <property type="match status" value="1"/>
</dbReference>
<dbReference type="PRINTS" id="PR00529">
    <property type="entry name" value="GNADOTRPHINR"/>
</dbReference>
<dbReference type="PRINTS" id="PR00237">
    <property type="entry name" value="GPCRRHODOPSN"/>
</dbReference>
<dbReference type="SUPFAM" id="SSF81321">
    <property type="entry name" value="Family A G protein-coupled receptor-like"/>
    <property type="match status" value="1"/>
</dbReference>
<dbReference type="PROSITE" id="PS00237">
    <property type="entry name" value="G_PROTEIN_RECEP_F1_1"/>
    <property type="match status" value="1"/>
</dbReference>
<dbReference type="PROSITE" id="PS50262">
    <property type="entry name" value="G_PROTEIN_RECEP_F1_2"/>
    <property type="match status" value="1"/>
</dbReference>
<evidence type="ECO:0000255" key="1"/>
<evidence type="ECO:0000255" key="2">
    <source>
        <dbReference type="PROSITE-ProRule" id="PRU00521"/>
    </source>
</evidence>
<evidence type="ECO:0000269" key="3">
    <source>
    </source>
</evidence>
<evidence type="ECO:0000305" key="4"/>
<gene>
    <name type="primary">Gnrhr</name>
</gene>